<proteinExistence type="inferred from homology"/>
<accession>Q03F96</accession>
<evidence type="ECO:0000255" key="1">
    <source>
        <dbReference type="HAMAP-Rule" id="MF_00008"/>
    </source>
</evidence>
<organism>
    <name type="scientific">Pediococcus pentosaceus (strain ATCC 25745 / CCUG 21536 / LMG 10740 / 183-1w)</name>
    <dbReference type="NCBI Taxonomy" id="278197"/>
    <lineage>
        <taxon>Bacteria</taxon>
        <taxon>Bacillati</taxon>
        <taxon>Bacillota</taxon>
        <taxon>Bacilli</taxon>
        <taxon>Lactobacillales</taxon>
        <taxon>Lactobacillaceae</taxon>
        <taxon>Pediococcus</taxon>
    </lineage>
</organism>
<gene>
    <name evidence="1" type="primary">thyA</name>
    <name type="ordered locus">PEPE_1070</name>
</gene>
<feature type="chain" id="PRO_1000000647" description="Thymidylate synthase">
    <location>
        <begin position="1"/>
        <end position="316"/>
    </location>
</feature>
<feature type="active site" description="Nucleophile" evidence="1">
    <location>
        <position position="198"/>
    </location>
</feature>
<feature type="binding site" description="in other chain" evidence="1">
    <location>
        <position position="23"/>
    </location>
    <ligand>
        <name>dUMP</name>
        <dbReference type="ChEBI" id="CHEBI:246422"/>
        <note>ligand shared between dimeric partners</note>
    </ligand>
</feature>
<feature type="binding site" evidence="1">
    <location>
        <begin position="178"/>
        <end position="179"/>
    </location>
    <ligand>
        <name>dUMP</name>
        <dbReference type="ChEBI" id="CHEBI:246422"/>
        <note>ligand shared between dimeric partners</note>
    </ligand>
</feature>
<feature type="binding site" description="in other chain" evidence="1">
    <location>
        <begin position="218"/>
        <end position="221"/>
    </location>
    <ligand>
        <name>dUMP</name>
        <dbReference type="ChEBI" id="CHEBI:246422"/>
        <note>ligand shared between dimeric partners</note>
    </ligand>
</feature>
<feature type="binding site" evidence="1">
    <location>
        <position position="221"/>
    </location>
    <ligand>
        <name>(6R)-5,10-methylene-5,6,7,8-tetrahydrofolate</name>
        <dbReference type="ChEBI" id="CHEBI:15636"/>
    </ligand>
</feature>
<feature type="binding site" description="in other chain" evidence="1">
    <location>
        <position position="229"/>
    </location>
    <ligand>
        <name>dUMP</name>
        <dbReference type="ChEBI" id="CHEBI:246422"/>
        <note>ligand shared between dimeric partners</note>
    </ligand>
</feature>
<feature type="binding site" description="in other chain" evidence="1">
    <location>
        <begin position="259"/>
        <end position="261"/>
    </location>
    <ligand>
        <name>dUMP</name>
        <dbReference type="ChEBI" id="CHEBI:246422"/>
        <note>ligand shared between dimeric partners</note>
    </ligand>
</feature>
<feature type="binding site" evidence="1">
    <location>
        <position position="315"/>
    </location>
    <ligand>
        <name>(6R)-5,10-methylene-5,6,7,8-tetrahydrofolate</name>
        <dbReference type="ChEBI" id="CHEBI:15636"/>
    </ligand>
</feature>
<dbReference type="EC" id="2.1.1.45" evidence="1"/>
<dbReference type="EMBL" id="CP000422">
    <property type="protein sequence ID" value="ABJ68126.1"/>
    <property type="molecule type" value="Genomic_DNA"/>
</dbReference>
<dbReference type="RefSeq" id="WP_011673474.1">
    <property type="nucleotide sequence ID" value="NC_008525.1"/>
</dbReference>
<dbReference type="SMR" id="Q03F96"/>
<dbReference type="STRING" id="278197.PEPE_1070"/>
<dbReference type="GeneID" id="33062960"/>
<dbReference type="KEGG" id="ppe:PEPE_1070"/>
<dbReference type="eggNOG" id="COG0207">
    <property type="taxonomic scope" value="Bacteria"/>
</dbReference>
<dbReference type="HOGENOM" id="CLU_021669_0_2_9"/>
<dbReference type="OrthoDB" id="9774633at2"/>
<dbReference type="UniPathway" id="UPA00575"/>
<dbReference type="Proteomes" id="UP000000773">
    <property type="component" value="Chromosome"/>
</dbReference>
<dbReference type="GO" id="GO:0005829">
    <property type="term" value="C:cytosol"/>
    <property type="evidence" value="ECO:0007669"/>
    <property type="project" value="TreeGrafter"/>
</dbReference>
<dbReference type="GO" id="GO:0004799">
    <property type="term" value="F:thymidylate synthase activity"/>
    <property type="evidence" value="ECO:0007669"/>
    <property type="project" value="UniProtKB-UniRule"/>
</dbReference>
<dbReference type="GO" id="GO:0006231">
    <property type="term" value="P:dTMP biosynthetic process"/>
    <property type="evidence" value="ECO:0007669"/>
    <property type="project" value="UniProtKB-UniRule"/>
</dbReference>
<dbReference type="GO" id="GO:0006235">
    <property type="term" value="P:dTTP biosynthetic process"/>
    <property type="evidence" value="ECO:0007669"/>
    <property type="project" value="UniProtKB-UniRule"/>
</dbReference>
<dbReference type="GO" id="GO:0032259">
    <property type="term" value="P:methylation"/>
    <property type="evidence" value="ECO:0007669"/>
    <property type="project" value="UniProtKB-KW"/>
</dbReference>
<dbReference type="CDD" id="cd00351">
    <property type="entry name" value="TS_Pyrimidine_HMase"/>
    <property type="match status" value="1"/>
</dbReference>
<dbReference type="Gene3D" id="3.30.572.10">
    <property type="entry name" value="Thymidylate synthase/dCMP hydroxymethylase domain"/>
    <property type="match status" value="1"/>
</dbReference>
<dbReference type="HAMAP" id="MF_00008">
    <property type="entry name" value="Thymidy_synth_bact"/>
    <property type="match status" value="1"/>
</dbReference>
<dbReference type="InterPro" id="IPR045097">
    <property type="entry name" value="Thymidate_synth/dCMP_Mease"/>
</dbReference>
<dbReference type="InterPro" id="IPR023451">
    <property type="entry name" value="Thymidate_synth/dCMP_Mease_dom"/>
</dbReference>
<dbReference type="InterPro" id="IPR036926">
    <property type="entry name" value="Thymidate_synth/dCMP_Mease_sf"/>
</dbReference>
<dbReference type="InterPro" id="IPR000398">
    <property type="entry name" value="Thymidylate_synthase"/>
</dbReference>
<dbReference type="InterPro" id="IPR020940">
    <property type="entry name" value="Thymidylate_synthase_AS"/>
</dbReference>
<dbReference type="NCBIfam" id="NF002496">
    <property type="entry name" value="PRK01827.1-2"/>
    <property type="match status" value="1"/>
</dbReference>
<dbReference type="NCBIfam" id="TIGR03284">
    <property type="entry name" value="thym_sym"/>
    <property type="match status" value="1"/>
</dbReference>
<dbReference type="PANTHER" id="PTHR11548:SF9">
    <property type="entry name" value="THYMIDYLATE SYNTHASE"/>
    <property type="match status" value="1"/>
</dbReference>
<dbReference type="PANTHER" id="PTHR11548">
    <property type="entry name" value="THYMIDYLATE SYNTHASE 1"/>
    <property type="match status" value="1"/>
</dbReference>
<dbReference type="Pfam" id="PF00303">
    <property type="entry name" value="Thymidylat_synt"/>
    <property type="match status" value="1"/>
</dbReference>
<dbReference type="PRINTS" id="PR00108">
    <property type="entry name" value="THYMDSNTHASE"/>
</dbReference>
<dbReference type="SUPFAM" id="SSF55831">
    <property type="entry name" value="Thymidylate synthase/dCMP hydroxymethylase"/>
    <property type="match status" value="1"/>
</dbReference>
<dbReference type="PROSITE" id="PS00091">
    <property type="entry name" value="THYMIDYLATE_SYNTHASE"/>
    <property type="match status" value="1"/>
</dbReference>
<protein>
    <recommendedName>
        <fullName evidence="1">Thymidylate synthase</fullName>
        <shortName evidence="1">TS</shortName>
        <shortName evidence="1">TSase</shortName>
        <ecNumber evidence="1">2.1.1.45</ecNumber>
    </recommendedName>
</protein>
<keyword id="KW-0963">Cytoplasm</keyword>
<keyword id="KW-0489">Methyltransferase</keyword>
<keyword id="KW-0545">Nucleotide biosynthesis</keyword>
<keyword id="KW-0808">Transferase</keyword>
<reference key="1">
    <citation type="journal article" date="2006" name="Proc. Natl. Acad. Sci. U.S.A.">
        <title>Comparative genomics of the lactic acid bacteria.</title>
        <authorList>
            <person name="Makarova K.S."/>
            <person name="Slesarev A."/>
            <person name="Wolf Y.I."/>
            <person name="Sorokin A."/>
            <person name="Mirkin B."/>
            <person name="Koonin E.V."/>
            <person name="Pavlov A."/>
            <person name="Pavlova N."/>
            <person name="Karamychev V."/>
            <person name="Polouchine N."/>
            <person name="Shakhova V."/>
            <person name="Grigoriev I."/>
            <person name="Lou Y."/>
            <person name="Rohksar D."/>
            <person name="Lucas S."/>
            <person name="Huang K."/>
            <person name="Goodstein D.M."/>
            <person name="Hawkins T."/>
            <person name="Plengvidhya V."/>
            <person name="Welker D."/>
            <person name="Hughes J."/>
            <person name="Goh Y."/>
            <person name="Benson A."/>
            <person name="Baldwin K."/>
            <person name="Lee J.-H."/>
            <person name="Diaz-Muniz I."/>
            <person name="Dosti B."/>
            <person name="Smeianov V."/>
            <person name="Wechter W."/>
            <person name="Barabote R."/>
            <person name="Lorca G."/>
            <person name="Altermann E."/>
            <person name="Barrangou R."/>
            <person name="Ganesan B."/>
            <person name="Xie Y."/>
            <person name="Rawsthorne H."/>
            <person name="Tamir D."/>
            <person name="Parker C."/>
            <person name="Breidt F."/>
            <person name="Broadbent J.R."/>
            <person name="Hutkins R."/>
            <person name="O'Sullivan D."/>
            <person name="Steele J."/>
            <person name="Unlu G."/>
            <person name="Saier M.H. Jr."/>
            <person name="Klaenhammer T."/>
            <person name="Richardson P."/>
            <person name="Kozyavkin S."/>
            <person name="Weimer B.C."/>
            <person name="Mills D.A."/>
        </authorList>
    </citation>
    <scope>NUCLEOTIDE SEQUENCE [LARGE SCALE GENOMIC DNA]</scope>
    <source>
        <strain>ATCC 25745 / CCUG 21536 / LMG 10740 / 183-1w</strain>
    </source>
</reference>
<name>TYSY_PEDPA</name>
<comment type="function">
    <text evidence="1">Catalyzes the reductive methylation of 2'-deoxyuridine-5'-monophosphate (dUMP) to 2'-deoxythymidine-5'-monophosphate (dTMP) while utilizing 5,10-methylenetetrahydrofolate (mTHF) as the methyl donor and reductant in the reaction, yielding dihydrofolate (DHF) as a by-product. This enzymatic reaction provides an intracellular de novo source of dTMP, an essential precursor for DNA biosynthesis.</text>
</comment>
<comment type="catalytic activity">
    <reaction evidence="1">
        <text>dUMP + (6R)-5,10-methylene-5,6,7,8-tetrahydrofolate = 7,8-dihydrofolate + dTMP</text>
        <dbReference type="Rhea" id="RHEA:12104"/>
        <dbReference type="ChEBI" id="CHEBI:15636"/>
        <dbReference type="ChEBI" id="CHEBI:57451"/>
        <dbReference type="ChEBI" id="CHEBI:63528"/>
        <dbReference type="ChEBI" id="CHEBI:246422"/>
        <dbReference type="EC" id="2.1.1.45"/>
    </reaction>
</comment>
<comment type="pathway">
    <text evidence="1">Pyrimidine metabolism; dTTP biosynthesis.</text>
</comment>
<comment type="subunit">
    <text evidence="1">Homodimer.</text>
</comment>
<comment type="subcellular location">
    <subcellularLocation>
        <location evidence="1">Cytoplasm</location>
    </subcellularLocation>
</comment>
<comment type="similarity">
    <text evidence="1">Belongs to the thymidylate synthase family. Bacterial-type ThyA subfamily.</text>
</comment>
<sequence>MLEEQYLNLERYVLENGHLKGDRTQTGTLSTFGYQMRFDLSEGFPLLTTKRVPFGLIKSELLWFLKGDTNIRYLLQHNNHIWDEWAFKKWVESDEYQGPDMTDFGHRSLTDPEFNELYKIEKQRFTEQILEDDTFSAKYGDLGNVYGSQWRAWKTSTGETIDQISNVIDMIKNNPNSRRMIVSAWNPEDVPTSALPPCHSLFQFYVADGKLSCQLYQRSGDIFLGIPFNIASYALLTELIAKATGLEVGEFIHTIGDAHIYSNHLDQVKEQLERTPRPAPKLKFKQVHDSIFDYEPGDIVVEGYDPHPTIKAPVAV</sequence>